<gene>
    <name type="primary">APOBEC3G</name>
</gene>
<keyword id="KW-0051">Antiviral defense</keyword>
<keyword id="KW-0963">Cytoplasm</keyword>
<keyword id="KW-0378">Hydrolase</keyword>
<keyword id="KW-0391">Immunity</keyword>
<keyword id="KW-0399">Innate immunity</keyword>
<keyword id="KW-0479">Metal-binding</keyword>
<keyword id="KW-0539">Nucleus</keyword>
<keyword id="KW-0597">Phosphoprotein</keyword>
<keyword id="KW-1185">Reference proteome</keyword>
<keyword id="KW-0677">Repeat</keyword>
<keyword id="KW-0862">Zinc</keyword>
<accession>Q694C2</accession>
<sequence>MQPQYRNTVERMYRGTFFYNFNNRPILSRRNTVWLCYEVKTRGPSMPTWDTKIFRGQVLRSKAKYHPEMRFLHWFREWRQLHHDQEYKVTWYVSWSPCTRCANSVATFLAKDPKVTLTIFVARLYYFWKPDYQQALRILCQKRGGLHATMKIMNYNEFQDCWNKFVDGGGKPFKPRNNLPKHYTLLQATLGELLRHLMDPGTFTSNFNNKPWVSGQHETYLCYKVERLHNDTWVPLNQHRGFLRNQAPNIHGFPKGRHAELCFLDLIPFWKLDGQQYRVTCFTSWSPCFSCAQEMAKFISNNEHLSLCIFAARIYDDQGRYQEGLRTLHRDGAKIAMMNYSEFKHCWDTFVDRQGRPFQPWDGLDEHSQALSERLRAILQNQGN</sequence>
<comment type="function">
    <text evidence="1">DNA deaminase (cytidine deaminase) which acts as an inhibitor of retrovirus replication and retrotransposon mobility. After the penetration of retroviral nucleocapsids into target cells of infection and the initiation of reverse transcription, it can induce the conversion of cytosine to uracil in the minus-sense single-strand viral DNA, leading to G-to-A hypermutations in the subsequent plus-strand viral DNA. The resultant detrimental levels of mutations in the proviral genome, along with a deamination-independent mechanism that works prior to the proviral integration, together exert efficient antiretroviral effects in infected target cells. Selectively targets single-stranded DNA and does not deaminate double-stranded DNA or single- or double-stranded RNA (By similarity).</text>
</comment>
<comment type="catalytic activity">
    <reaction evidence="1">
        <text>a 2'-deoxycytidine in single-stranded DNA + H2O + H(+) = a 2'-deoxyuridine in single-stranded DNA + NH4(+)</text>
        <dbReference type="Rhea" id="RHEA:50948"/>
        <dbReference type="Rhea" id="RHEA-COMP:12846"/>
        <dbReference type="Rhea" id="RHEA-COMP:12847"/>
        <dbReference type="ChEBI" id="CHEBI:15377"/>
        <dbReference type="ChEBI" id="CHEBI:15378"/>
        <dbReference type="ChEBI" id="CHEBI:28938"/>
        <dbReference type="ChEBI" id="CHEBI:85452"/>
        <dbReference type="ChEBI" id="CHEBI:133902"/>
        <dbReference type="EC" id="3.5.4.38"/>
    </reaction>
</comment>
<comment type="cofactor">
    <cofactor evidence="1">
        <name>Zn(2+)</name>
        <dbReference type="ChEBI" id="CHEBI:29105"/>
    </cofactor>
</comment>
<comment type="subunit">
    <text evidence="1">Homodimer. Homooligomer. Can bind RNA to form ribonucleoprotein complexes of high-molecular-mass (HMM) or low-molecular-mass (LMM). HMM is inactive and heterogeneous in protein composition because of binding nonselectively to cellular RNAs, which in turn are associated with variety of cellular proteins. The LMM form which is enzymatically active has few or no RNAs associated. Its ability to form homooligomer is distinct from its ability to assemble into HMM. Interacts with APOBEC3B, APOBEC3F, MOV10, AGO2, EIF4E, EIF4ENIF1, DCP2 and DDX6 in an RNA-dependent manner. Interacts with AGO1, AGO3 and PKA/PRKACA (By similarity).</text>
</comment>
<comment type="subcellular location">
    <subcellularLocation>
        <location evidence="1">Cytoplasm</location>
    </subcellularLocation>
    <subcellularLocation>
        <location evidence="1">Nucleus</location>
    </subcellularLocation>
    <subcellularLocation>
        <location evidence="1">Cytoplasm</location>
        <location evidence="1">P-body</location>
    </subcellularLocation>
    <text evidence="1">Mainly cytoplasmic, small amount are found in the nucleus.</text>
</comment>
<comment type="domain">
    <text evidence="1">The CMP/dCMP deaminase domain 1 mediates RNA binding, RNA-dependent oligomerization and virion incorporation whereas the CMP/dCMP deaminase domain 2 confers deoxycytidine deaminase activity and substrate sequence specificity.</text>
</comment>
<comment type="similarity">
    <text evidence="3">Belongs to the cytidine and deoxycytidylate deaminase family.</text>
</comment>
<proteinExistence type="inferred from homology"/>
<evidence type="ECO:0000250" key="1">
    <source>
        <dbReference type="UniProtKB" id="Q9HC16"/>
    </source>
</evidence>
<evidence type="ECO:0000255" key="2">
    <source>
        <dbReference type="PROSITE-ProRule" id="PRU01083"/>
    </source>
</evidence>
<evidence type="ECO:0000305" key="3"/>
<feature type="chain" id="PRO_0000171763" description="DNA dC-&gt;dU-editing enzyme APOBEC-3G">
    <location>
        <begin position="1"/>
        <end position="384"/>
    </location>
</feature>
<feature type="domain" description="CMP/dCMP-type deaminase 1" evidence="2">
    <location>
        <begin position="29"/>
        <end position="139"/>
    </location>
</feature>
<feature type="domain" description="CMP/dCMP-type deaminase 2" evidence="2">
    <location>
        <begin position="215"/>
        <end position="328"/>
    </location>
</feature>
<feature type="region of interest" description="Essential for cytoplasmic localization" evidence="3">
    <location>
        <begin position="1"/>
        <end position="61"/>
    </location>
</feature>
<feature type="region of interest" description="Necessary for homooligomerization" evidence="3">
    <location>
        <begin position="210"/>
        <end position="336"/>
    </location>
</feature>
<feature type="region of interest" description="Interaction with DNA" evidence="3">
    <location>
        <begin position="214"/>
        <end position="216"/>
    </location>
</feature>
<feature type="region of interest" description="Interaction with DNA" evidence="3">
    <location>
        <begin position="313"/>
        <end position="320"/>
    </location>
</feature>
<feature type="active site" description="Proton donor" evidence="2">
    <location>
        <position position="260"/>
    </location>
</feature>
<feature type="binding site" evidence="2">
    <location>
        <position position="66"/>
    </location>
    <ligand>
        <name>Zn(2+)</name>
        <dbReference type="ChEBI" id="CHEBI:29105"/>
        <label>1</label>
    </ligand>
</feature>
<feature type="binding site" evidence="2">
    <location>
        <position position="98"/>
    </location>
    <ligand>
        <name>Zn(2+)</name>
        <dbReference type="ChEBI" id="CHEBI:29105"/>
        <label>1</label>
    </ligand>
</feature>
<feature type="binding site" evidence="2">
    <location>
        <position position="101"/>
    </location>
    <ligand>
        <name>Zn(2+)</name>
        <dbReference type="ChEBI" id="CHEBI:29105"/>
        <label>1</label>
    </ligand>
</feature>
<feature type="binding site" evidence="1">
    <location>
        <position position="258"/>
    </location>
    <ligand>
        <name>Zn(2+)</name>
        <dbReference type="ChEBI" id="CHEBI:29105"/>
        <label>2</label>
        <note>catalytic</note>
    </ligand>
</feature>
<feature type="binding site" evidence="1">
    <location>
        <position position="288"/>
    </location>
    <ligand>
        <name>Zn(2+)</name>
        <dbReference type="ChEBI" id="CHEBI:29105"/>
        <label>2</label>
        <note>catalytic</note>
    </ligand>
</feature>
<feature type="binding site" evidence="1">
    <location>
        <position position="291"/>
    </location>
    <ligand>
        <name>Zn(2+)</name>
        <dbReference type="ChEBI" id="CHEBI:29105"/>
        <label>2</label>
        <note>catalytic</note>
    </ligand>
</feature>
<feature type="site" description="Interaction with DNA" evidence="3">
    <location>
        <position position="245"/>
    </location>
</feature>
<feature type="modified residue" description="Phosphothreonine; by PKA" evidence="1">
    <location>
        <position position="32"/>
    </location>
</feature>
<feature type="modified residue" description="Phosphothreonine; by PKA and CAMK2" evidence="1">
    <location>
        <position position="219"/>
    </location>
</feature>
<reference key="1">
    <citation type="journal article" date="2004" name="PLoS Biol.">
        <title>Ancient adaptive evolution of the primate antiviral DNA-editing enzyme APOBEC3G.</title>
        <authorList>
            <person name="Sawyer S.L."/>
            <person name="Emerman M."/>
            <person name="Malik H.S."/>
        </authorList>
    </citation>
    <scope>NUCLEOTIDE SEQUENCE [GENOMIC DNA]</scope>
</reference>
<protein>
    <recommendedName>
        <fullName evidence="1">DNA dC-&gt;dU-editing enzyme APOBEC-3G</fullName>
        <ecNumber evidence="1">3.5.4.38</ecNumber>
    </recommendedName>
    <alternativeName>
        <fullName>Deoxycytidine deaminase</fullName>
    </alternativeName>
</protein>
<dbReference type="EC" id="3.5.4.38" evidence="1"/>
<dbReference type="EMBL" id="AY622545">
    <property type="protein sequence ID" value="AAT44393.1"/>
    <property type="molecule type" value="Genomic_DNA"/>
</dbReference>
<dbReference type="EMBL" id="AY622538">
    <property type="protein sequence ID" value="AAT44393.1"/>
    <property type="status" value="JOINED"/>
    <property type="molecule type" value="Genomic_DNA"/>
</dbReference>
<dbReference type="EMBL" id="AY622539">
    <property type="protein sequence ID" value="AAT44393.1"/>
    <property type="status" value="JOINED"/>
    <property type="molecule type" value="Genomic_DNA"/>
</dbReference>
<dbReference type="EMBL" id="AY622540">
    <property type="protein sequence ID" value="AAT44393.1"/>
    <property type="status" value="JOINED"/>
    <property type="molecule type" value="Genomic_DNA"/>
</dbReference>
<dbReference type="EMBL" id="AY622541">
    <property type="protein sequence ID" value="AAT44393.1"/>
    <property type="status" value="JOINED"/>
    <property type="molecule type" value="Genomic_DNA"/>
</dbReference>
<dbReference type="EMBL" id="AY622542">
    <property type="protein sequence ID" value="AAT44393.1"/>
    <property type="status" value="JOINED"/>
    <property type="molecule type" value="Genomic_DNA"/>
</dbReference>
<dbReference type="EMBL" id="AY622543">
    <property type="protein sequence ID" value="AAT44393.1"/>
    <property type="status" value="JOINED"/>
    <property type="molecule type" value="Genomic_DNA"/>
</dbReference>
<dbReference type="EMBL" id="AY622544">
    <property type="protein sequence ID" value="AAT44393.1"/>
    <property type="status" value="JOINED"/>
    <property type="molecule type" value="Genomic_DNA"/>
</dbReference>
<dbReference type="SMR" id="Q694C2"/>
<dbReference type="STRING" id="9541.ENSMFAP00000026651"/>
<dbReference type="eggNOG" id="KOG4075">
    <property type="taxonomic scope" value="Eukaryota"/>
</dbReference>
<dbReference type="Proteomes" id="UP000233100">
    <property type="component" value="Unplaced"/>
</dbReference>
<dbReference type="GO" id="GO:0005737">
    <property type="term" value="C:cytoplasm"/>
    <property type="evidence" value="ECO:0000250"/>
    <property type="project" value="UniProtKB"/>
</dbReference>
<dbReference type="GO" id="GO:0005634">
    <property type="term" value="C:nucleus"/>
    <property type="evidence" value="ECO:0007669"/>
    <property type="project" value="UniProtKB-SubCell"/>
</dbReference>
<dbReference type="GO" id="GO:0000932">
    <property type="term" value="C:P-body"/>
    <property type="evidence" value="ECO:0000250"/>
    <property type="project" value="UniProtKB"/>
</dbReference>
<dbReference type="GO" id="GO:1990904">
    <property type="term" value="C:ribonucleoprotein complex"/>
    <property type="evidence" value="ECO:0000250"/>
    <property type="project" value="UniProtKB"/>
</dbReference>
<dbReference type="GO" id="GO:0004126">
    <property type="term" value="F:cytidine deaminase activity"/>
    <property type="evidence" value="ECO:0000250"/>
    <property type="project" value="UniProtKB"/>
</dbReference>
<dbReference type="GO" id="GO:0003723">
    <property type="term" value="F:RNA binding"/>
    <property type="evidence" value="ECO:0007669"/>
    <property type="project" value="TreeGrafter"/>
</dbReference>
<dbReference type="GO" id="GO:0008270">
    <property type="term" value="F:zinc ion binding"/>
    <property type="evidence" value="ECO:0007669"/>
    <property type="project" value="InterPro"/>
</dbReference>
<dbReference type="GO" id="GO:0009972">
    <property type="term" value="P:cytidine deamination"/>
    <property type="evidence" value="ECO:0000250"/>
    <property type="project" value="UniProtKB"/>
</dbReference>
<dbReference type="GO" id="GO:0016554">
    <property type="term" value="P:cytidine to uridine editing"/>
    <property type="evidence" value="ECO:0007669"/>
    <property type="project" value="TreeGrafter"/>
</dbReference>
<dbReference type="GO" id="GO:0051607">
    <property type="term" value="P:defense response to virus"/>
    <property type="evidence" value="ECO:0000250"/>
    <property type="project" value="UniProtKB"/>
</dbReference>
<dbReference type="GO" id="GO:0070383">
    <property type="term" value="P:DNA cytosine deamination"/>
    <property type="evidence" value="ECO:0007669"/>
    <property type="project" value="TreeGrafter"/>
</dbReference>
<dbReference type="GO" id="GO:0045087">
    <property type="term" value="P:innate immune response"/>
    <property type="evidence" value="ECO:0007669"/>
    <property type="project" value="UniProtKB-KW"/>
</dbReference>
<dbReference type="GO" id="GO:0045869">
    <property type="term" value="P:negative regulation of single stranded viral RNA replication via double stranded DNA intermediate"/>
    <property type="evidence" value="ECO:0007669"/>
    <property type="project" value="TreeGrafter"/>
</dbReference>
<dbReference type="GO" id="GO:0010526">
    <property type="term" value="P:transposable element silencing"/>
    <property type="evidence" value="ECO:0000250"/>
    <property type="project" value="UniProtKB"/>
</dbReference>
<dbReference type="CDD" id="cd01283">
    <property type="entry name" value="cytidine_deaminase"/>
    <property type="match status" value="2"/>
</dbReference>
<dbReference type="FunFam" id="3.40.140.10:FF:000029">
    <property type="entry name" value="DNA dC-&gt;dU-editing enzyme APOBEC-3G"/>
    <property type="match status" value="2"/>
</dbReference>
<dbReference type="Gene3D" id="3.40.140.10">
    <property type="entry name" value="Cytidine Deaminase, domain 2"/>
    <property type="match status" value="2"/>
</dbReference>
<dbReference type="InterPro" id="IPR016192">
    <property type="entry name" value="APOBEC/CMP_deaminase_Zn-bd"/>
</dbReference>
<dbReference type="InterPro" id="IPR050610">
    <property type="entry name" value="APOBEC_Cyt_Deaminase"/>
</dbReference>
<dbReference type="InterPro" id="IPR002125">
    <property type="entry name" value="CMP_dCMP_dom"/>
</dbReference>
<dbReference type="InterPro" id="IPR016193">
    <property type="entry name" value="Cytidine_deaminase-like"/>
</dbReference>
<dbReference type="PANTHER" id="PTHR13857:SF20">
    <property type="entry name" value="DNA DC-DU-EDITING ENZYME APOBEC-3G"/>
    <property type="match status" value="1"/>
</dbReference>
<dbReference type="PANTHER" id="PTHR13857">
    <property type="entry name" value="MRNA EDITING ENZYME"/>
    <property type="match status" value="1"/>
</dbReference>
<dbReference type="Pfam" id="PF18782">
    <property type="entry name" value="NAD2"/>
    <property type="match status" value="2"/>
</dbReference>
<dbReference type="SUPFAM" id="SSF53927">
    <property type="entry name" value="Cytidine deaminase-like"/>
    <property type="match status" value="2"/>
</dbReference>
<dbReference type="PROSITE" id="PS00903">
    <property type="entry name" value="CYT_DCMP_DEAMINASES_1"/>
    <property type="match status" value="1"/>
</dbReference>
<dbReference type="PROSITE" id="PS51747">
    <property type="entry name" value="CYT_DCMP_DEAMINASES_2"/>
    <property type="match status" value="2"/>
</dbReference>
<organism>
    <name type="scientific">Macaca fascicularis</name>
    <name type="common">Crab-eating macaque</name>
    <name type="synonym">Cynomolgus monkey</name>
    <dbReference type="NCBI Taxonomy" id="9541"/>
    <lineage>
        <taxon>Eukaryota</taxon>
        <taxon>Metazoa</taxon>
        <taxon>Chordata</taxon>
        <taxon>Craniata</taxon>
        <taxon>Vertebrata</taxon>
        <taxon>Euteleostomi</taxon>
        <taxon>Mammalia</taxon>
        <taxon>Eutheria</taxon>
        <taxon>Euarchontoglires</taxon>
        <taxon>Primates</taxon>
        <taxon>Haplorrhini</taxon>
        <taxon>Catarrhini</taxon>
        <taxon>Cercopithecidae</taxon>
        <taxon>Cercopithecinae</taxon>
        <taxon>Macaca</taxon>
    </lineage>
</organism>
<name>ABC3G_MACFA</name>